<reference key="1">
    <citation type="journal article" date="2004" name="Nucleic Acids Res.">
        <title>The genome sequence of Bacillus cereus ATCC 10987 reveals metabolic adaptations and a large plasmid related to Bacillus anthracis pXO1.</title>
        <authorList>
            <person name="Rasko D.A."/>
            <person name="Ravel J."/>
            <person name="Oekstad O.A."/>
            <person name="Helgason E."/>
            <person name="Cer R.Z."/>
            <person name="Jiang L."/>
            <person name="Shores K.A."/>
            <person name="Fouts D.E."/>
            <person name="Tourasse N.J."/>
            <person name="Angiuoli S.V."/>
            <person name="Kolonay J.F."/>
            <person name="Nelson W.C."/>
            <person name="Kolstoe A.-B."/>
            <person name="Fraser C.M."/>
            <person name="Read T.D."/>
        </authorList>
    </citation>
    <scope>NUCLEOTIDE SEQUENCE [LARGE SCALE GENOMIC DNA]</scope>
    <source>
        <strain>ATCC 10987 / NRS 248</strain>
    </source>
</reference>
<feature type="chain" id="PRO_0000163602" description="1-deoxy-D-xylulose 5-phosphate reductoisomerase">
    <location>
        <begin position="1"/>
        <end position="380"/>
    </location>
</feature>
<feature type="binding site" evidence="1">
    <location>
        <position position="10"/>
    </location>
    <ligand>
        <name>NADPH</name>
        <dbReference type="ChEBI" id="CHEBI:57783"/>
    </ligand>
</feature>
<feature type="binding site" evidence="1">
    <location>
        <position position="11"/>
    </location>
    <ligand>
        <name>NADPH</name>
        <dbReference type="ChEBI" id="CHEBI:57783"/>
    </ligand>
</feature>
<feature type="binding site" evidence="1">
    <location>
        <position position="12"/>
    </location>
    <ligand>
        <name>NADPH</name>
        <dbReference type="ChEBI" id="CHEBI:57783"/>
    </ligand>
</feature>
<feature type="binding site" evidence="1">
    <location>
        <position position="13"/>
    </location>
    <ligand>
        <name>NADPH</name>
        <dbReference type="ChEBI" id="CHEBI:57783"/>
    </ligand>
</feature>
<feature type="binding site" evidence="1">
    <location>
        <position position="36"/>
    </location>
    <ligand>
        <name>NADPH</name>
        <dbReference type="ChEBI" id="CHEBI:57783"/>
    </ligand>
</feature>
<feature type="binding site" evidence="1">
    <location>
        <position position="37"/>
    </location>
    <ligand>
        <name>NADPH</name>
        <dbReference type="ChEBI" id="CHEBI:57783"/>
    </ligand>
</feature>
<feature type="binding site" evidence="1">
    <location>
        <position position="38"/>
    </location>
    <ligand>
        <name>NADPH</name>
        <dbReference type="ChEBI" id="CHEBI:57783"/>
    </ligand>
</feature>
<feature type="binding site" evidence="1">
    <location>
        <position position="120"/>
    </location>
    <ligand>
        <name>NADPH</name>
        <dbReference type="ChEBI" id="CHEBI:57783"/>
    </ligand>
</feature>
<feature type="binding site" evidence="1">
    <location>
        <position position="121"/>
    </location>
    <ligand>
        <name>1-deoxy-D-xylulose 5-phosphate</name>
        <dbReference type="ChEBI" id="CHEBI:57792"/>
    </ligand>
</feature>
<feature type="binding site" evidence="1">
    <location>
        <position position="122"/>
    </location>
    <ligand>
        <name>NADPH</name>
        <dbReference type="ChEBI" id="CHEBI:57783"/>
    </ligand>
</feature>
<feature type="binding site" evidence="1">
    <location>
        <position position="146"/>
    </location>
    <ligand>
        <name>Mn(2+)</name>
        <dbReference type="ChEBI" id="CHEBI:29035"/>
    </ligand>
</feature>
<feature type="binding site" evidence="1">
    <location>
        <position position="147"/>
    </location>
    <ligand>
        <name>1-deoxy-D-xylulose 5-phosphate</name>
        <dbReference type="ChEBI" id="CHEBI:57792"/>
    </ligand>
</feature>
<feature type="binding site" evidence="1">
    <location>
        <position position="148"/>
    </location>
    <ligand>
        <name>1-deoxy-D-xylulose 5-phosphate</name>
        <dbReference type="ChEBI" id="CHEBI:57792"/>
    </ligand>
</feature>
<feature type="binding site" evidence="1">
    <location>
        <position position="148"/>
    </location>
    <ligand>
        <name>Mn(2+)</name>
        <dbReference type="ChEBI" id="CHEBI:29035"/>
    </ligand>
</feature>
<feature type="binding site" evidence="1">
    <location>
        <position position="172"/>
    </location>
    <ligand>
        <name>1-deoxy-D-xylulose 5-phosphate</name>
        <dbReference type="ChEBI" id="CHEBI:57792"/>
    </ligand>
</feature>
<feature type="binding site" evidence="1">
    <location>
        <position position="195"/>
    </location>
    <ligand>
        <name>1-deoxy-D-xylulose 5-phosphate</name>
        <dbReference type="ChEBI" id="CHEBI:57792"/>
    </ligand>
</feature>
<feature type="binding site" evidence="1">
    <location>
        <position position="201"/>
    </location>
    <ligand>
        <name>NADPH</name>
        <dbReference type="ChEBI" id="CHEBI:57783"/>
    </ligand>
</feature>
<feature type="binding site" evidence="1">
    <location>
        <position position="208"/>
    </location>
    <ligand>
        <name>1-deoxy-D-xylulose 5-phosphate</name>
        <dbReference type="ChEBI" id="CHEBI:57792"/>
    </ligand>
</feature>
<feature type="binding site" evidence="1">
    <location>
        <position position="213"/>
    </location>
    <ligand>
        <name>1-deoxy-D-xylulose 5-phosphate</name>
        <dbReference type="ChEBI" id="CHEBI:57792"/>
    </ligand>
</feature>
<feature type="binding site" evidence="1">
    <location>
        <position position="214"/>
    </location>
    <ligand>
        <name>1-deoxy-D-xylulose 5-phosphate</name>
        <dbReference type="ChEBI" id="CHEBI:57792"/>
    </ligand>
</feature>
<feature type="binding site" evidence="1">
    <location>
        <position position="217"/>
    </location>
    <ligand>
        <name>1-deoxy-D-xylulose 5-phosphate</name>
        <dbReference type="ChEBI" id="CHEBI:57792"/>
    </ligand>
</feature>
<feature type="binding site" evidence="1">
    <location>
        <position position="217"/>
    </location>
    <ligand>
        <name>Mn(2+)</name>
        <dbReference type="ChEBI" id="CHEBI:29035"/>
    </ligand>
</feature>
<sequence length="380" mass="42317">MKNISLLGASGSIGTQTLDVLRSHPDQFRLVAFSVGKNIDYAVKVIQEFSPQIVSVQREEDVLKLQAVSGNTKIVYGSEGLLEVALHPDAEIVVNAVVGSVGLLPTLRAIEAKKTIGIANKETLVTAGHLVMEAARKHNVSLLPVDSEHSAIFQCLNGENEKRISRLIITASGGSFRDKTRDELHHVTVEDALRHPNWSMGSKITIDSATMMNKGLEVIEAHWLFGIPYEQIDVVLHKESIIHSMVEFEDRSVMAQLGSPDMRVPIQYALTYPDRLPLSDTKQLNLWEMGTLHFEKMNQERFRCLRFAYEAGKTGGSMPAVMNAANEVAVEAFLQKRIGFLTVEDLIEKAMNHHNVIARPSLEEILEIDATTRRFVMEQI</sequence>
<proteinExistence type="inferred from homology"/>
<organism>
    <name type="scientific">Bacillus cereus (strain ATCC 10987 / NRS 248)</name>
    <dbReference type="NCBI Taxonomy" id="222523"/>
    <lineage>
        <taxon>Bacteria</taxon>
        <taxon>Bacillati</taxon>
        <taxon>Bacillota</taxon>
        <taxon>Bacilli</taxon>
        <taxon>Bacillales</taxon>
        <taxon>Bacillaceae</taxon>
        <taxon>Bacillus</taxon>
        <taxon>Bacillus cereus group</taxon>
    </lineage>
</organism>
<evidence type="ECO:0000255" key="1">
    <source>
        <dbReference type="HAMAP-Rule" id="MF_00183"/>
    </source>
</evidence>
<keyword id="KW-0414">Isoprene biosynthesis</keyword>
<keyword id="KW-0464">Manganese</keyword>
<keyword id="KW-0479">Metal-binding</keyword>
<keyword id="KW-0521">NADP</keyword>
<keyword id="KW-0560">Oxidoreductase</keyword>
<accession>Q732P8</accession>
<comment type="function">
    <text evidence="1">Catalyzes the NADPH-dependent rearrangement and reduction of 1-deoxy-D-xylulose-5-phosphate (DXP) to 2-C-methyl-D-erythritol 4-phosphate (MEP).</text>
</comment>
<comment type="catalytic activity">
    <reaction evidence="1">
        <text>2-C-methyl-D-erythritol 4-phosphate + NADP(+) = 1-deoxy-D-xylulose 5-phosphate + NADPH + H(+)</text>
        <dbReference type="Rhea" id="RHEA:13717"/>
        <dbReference type="ChEBI" id="CHEBI:15378"/>
        <dbReference type="ChEBI" id="CHEBI:57783"/>
        <dbReference type="ChEBI" id="CHEBI:57792"/>
        <dbReference type="ChEBI" id="CHEBI:58262"/>
        <dbReference type="ChEBI" id="CHEBI:58349"/>
        <dbReference type="EC" id="1.1.1.267"/>
    </reaction>
    <physiologicalReaction direction="right-to-left" evidence="1">
        <dbReference type="Rhea" id="RHEA:13719"/>
    </physiologicalReaction>
</comment>
<comment type="cofactor">
    <cofactor evidence="1">
        <name>Mg(2+)</name>
        <dbReference type="ChEBI" id="CHEBI:18420"/>
    </cofactor>
    <cofactor evidence="1">
        <name>Mn(2+)</name>
        <dbReference type="ChEBI" id="CHEBI:29035"/>
    </cofactor>
</comment>
<comment type="pathway">
    <text evidence="1">Isoprenoid biosynthesis; isopentenyl diphosphate biosynthesis via DXP pathway; isopentenyl diphosphate from 1-deoxy-D-xylulose 5-phosphate: step 1/6.</text>
</comment>
<comment type="similarity">
    <text evidence="1">Belongs to the DXR family.</text>
</comment>
<protein>
    <recommendedName>
        <fullName evidence="1">1-deoxy-D-xylulose 5-phosphate reductoisomerase</fullName>
        <shortName evidence="1">DXP reductoisomerase</shortName>
        <ecNumber evidence="1">1.1.1.267</ecNumber>
    </recommendedName>
    <alternativeName>
        <fullName evidence="1">1-deoxyxylulose-5-phosphate reductoisomerase</fullName>
    </alternativeName>
    <alternativeName>
        <fullName evidence="1">2-C-methyl-D-erythritol 4-phosphate synthase</fullName>
    </alternativeName>
</protein>
<gene>
    <name evidence="1" type="primary">dxr</name>
    <name type="ordered locus">BCE_3862</name>
</gene>
<name>DXR_BACC1</name>
<dbReference type="EC" id="1.1.1.267" evidence="1"/>
<dbReference type="EMBL" id="AE017194">
    <property type="protein sequence ID" value="AAS42767.1"/>
    <property type="molecule type" value="Genomic_DNA"/>
</dbReference>
<dbReference type="SMR" id="Q732P8"/>
<dbReference type="KEGG" id="bca:BCE_3862"/>
<dbReference type="HOGENOM" id="CLU_035714_4_0_9"/>
<dbReference type="UniPathway" id="UPA00056">
    <property type="reaction ID" value="UER00092"/>
</dbReference>
<dbReference type="Proteomes" id="UP000002527">
    <property type="component" value="Chromosome"/>
</dbReference>
<dbReference type="GO" id="GO:0030604">
    <property type="term" value="F:1-deoxy-D-xylulose-5-phosphate reductoisomerase activity"/>
    <property type="evidence" value="ECO:0007669"/>
    <property type="project" value="UniProtKB-UniRule"/>
</dbReference>
<dbReference type="GO" id="GO:0030145">
    <property type="term" value="F:manganese ion binding"/>
    <property type="evidence" value="ECO:0007669"/>
    <property type="project" value="TreeGrafter"/>
</dbReference>
<dbReference type="GO" id="GO:0070402">
    <property type="term" value="F:NADPH binding"/>
    <property type="evidence" value="ECO:0007669"/>
    <property type="project" value="InterPro"/>
</dbReference>
<dbReference type="GO" id="GO:0051484">
    <property type="term" value="P:isopentenyl diphosphate biosynthetic process, methylerythritol 4-phosphate pathway involved in terpenoid biosynthetic process"/>
    <property type="evidence" value="ECO:0007669"/>
    <property type="project" value="TreeGrafter"/>
</dbReference>
<dbReference type="FunFam" id="1.10.1740.10:FF:000005">
    <property type="entry name" value="1-deoxy-D-xylulose 5-phosphate reductoisomerase"/>
    <property type="match status" value="1"/>
</dbReference>
<dbReference type="FunFam" id="3.40.50.720:FF:000045">
    <property type="entry name" value="1-deoxy-D-xylulose 5-phosphate reductoisomerase"/>
    <property type="match status" value="1"/>
</dbReference>
<dbReference type="Gene3D" id="1.10.1740.10">
    <property type="match status" value="1"/>
</dbReference>
<dbReference type="Gene3D" id="3.40.50.720">
    <property type="entry name" value="NAD(P)-binding Rossmann-like Domain"/>
    <property type="match status" value="1"/>
</dbReference>
<dbReference type="HAMAP" id="MF_00183">
    <property type="entry name" value="DXP_reductoisom"/>
    <property type="match status" value="1"/>
</dbReference>
<dbReference type="InterPro" id="IPR003821">
    <property type="entry name" value="DXP_reductoisomerase"/>
</dbReference>
<dbReference type="InterPro" id="IPR013644">
    <property type="entry name" value="DXP_reductoisomerase_C"/>
</dbReference>
<dbReference type="InterPro" id="IPR013512">
    <property type="entry name" value="DXP_reductoisomerase_N"/>
</dbReference>
<dbReference type="InterPro" id="IPR026877">
    <property type="entry name" value="DXPR_C"/>
</dbReference>
<dbReference type="InterPro" id="IPR036169">
    <property type="entry name" value="DXPR_C_sf"/>
</dbReference>
<dbReference type="InterPro" id="IPR036291">
    <property type="entry name" value="NAD(P)-bd_dom_sf"/>
</dbReference>
<dbReference type="NCBIfam" id="TIGR00243">
    <property type="entry name" value="Dxr"/>
    <property type="match status" value="1"/>
</dbReference>
<dbReference type="NCBIfam" id="NF009114">
    <property type="entry name" value="PRK12464.1"/>
    <property type="match status" value="1"/>
</dbReference>
<dbReference type="PANTHER" id="PTHR30525">
    <property type="entry name" value="1-DEOXY-D-XYLULOSE 5-PHOSPHATE REDUCTOISOMERASE"/>
    <property type="match status" value="1"/>
</dbReference>
<dbReference type="PANTHER" id="PTHR30525:SF0">
    <property type="entry name" value="1-DEOXY-D-XYLULOSE 5-PHOSPHATE REDUCTOISOMERASE, CHLOROPLASTIC"/>
    <property type="match status" value="1"/>
</dbReference>
<dbReference type="Pfam" id="PF08436">
    <property type="entry name" value="DXP_redisom_C"/>
    <property type="match status" value="1"/>
</dbReference>
<dbReference type="Pfam" id="PF02670">
    <property type="entry name" value="DXP_reductoisom"/>
    <property type="match status" value="1"/>
</dbReference>
<dbReference type="Pfam" id="PF13288">
    <property type="entry name" value="DXPR_C"/>
    <property type="match status" value="1"/>
</dbReference>
<dbReference type="PIRSF" id="PIRSF006205">
    <property type="entry name" value="Dxp_reductismrs"/>
    <property type="match status" value="1"/>
</dbReference>
<dbReference type="SUPFAM" id="SSF69055">
    <property type="entry name" value="1-deoxy-D-xylulose-5-phosphate reductoisomerase, C-terminal domain"/>
    <property type="match status" value="1"/>
</dbReference>
<dbReference type="SUPFAM" id="SSF55347">
    <property type="entry name" value="Glyceraldehyde-3-phosphate dehydrogenase-like, C-terminal domain"/>
    <property type="match status" value="1"/>
</dbReference>
<dbReference type="SUPFAM" id="SSF51735">
    <property type="entry name" value="NAD(P)-binding Rossmann-fold domains"/>
    <property type="match status" value="1"/>
</dbReference>